<gene>
    <name type="primary">LRRC66</name>
</gene>
<reference key="1">
    <citation type="journal article" date="2007" name="BMC Genomics">
        <title>The full-ORF clone resource of the German cDNA consortium.</title>
        <authorList>
            <person name="Bechtel S."/>
            <person name="Rosenfelder H."/>
            <person name="Duda A."/>
            <person name="Schmidt C.P."/>
            <person name="Ernst U."/>
            <person name="Wellenreuther R."/>
            <person name="Mehrle A."/>
            <person name="Schuster C."/>
            <person name="Bahr A."/>
            <person name="Bloecker H."/>
            <person name="Heubner D."/>
            <person name="Hoerlein A."/>
            <person name="Michel G."/>
            <person name="Wedler H."/>
            <person name="Koehrer K."/>
            <person name="Ottenwaelder B."/>
            <person name="Poustka A."/>
            <person name="Wiemann S."/>
            <person name="Schupp I."/>
        </authorList>
    </citation>
    <scope>NUCLEOTIDE SEQUENCE [LARGE SCALE MRNA]</scope>
    <source>
        <tissue>Colon carcinoma</tissue>
    </source>
</reference>
<accession>Q68CR7</accession>
<protein>
    <recommendedName>
        <fullName>Leucine-rich repeat-containing protein 66</fullName>
    </recommendedName>
</protein>
<organism>
    <name type="scientific">Homo sapiens</name>
    <name type="common">Human</name>
    <dbReference type="NCBI Taxonomy" id="9606"/>
    <lineage>
        <taxon>Eukaryota</taxon>
        <taxon>Metazoa</taxon>
        <taxon>Chordata</taxon>
        <taxon>Craniata</taxon>
        <taxon>Vertebrata</taxon>
        <taxon>Euteleostomi</taxon>
        <taxon>Mammalia</taxon>
        <taxon>Eutheria</taxon>
        <taxon>Euarchontoglires</taxon>
        <taxon>Primates</taxon>
        <taxon>Haplorrhini</taxon>
        <taxon>Catarrhini</taxon>
        <taxon>Hominidae</taxon>
        <taxon>Homo</taxon>
    </lineage>
</organism>
<sequence>MKNLYFRVITIVIGLYFTGIMTNASRKSNILFNSECQWNEYILTNCSFTGKCDIPVDISQTAATVDVSFNFFRVLLQSHTKKEEWKIKHLDLSNNLISKITLSPFAYLHALEVLNLSNNAIHSLSLDLLSPKSSWVKRHRSSFRNRFPLLKVLILQRNKLSDTPKGLWKLKSLQSLDLSFNGILQIGWSDFHNCLQLENLCLKSNKIFKIPPQAFKDLKKLQVIDLSNNALITILPMMIIALEFPHLVVDLADNNWQCDDSVAVFQNFISESWRKKWNVICNRSIGSEEANGGTPQSRISRETRLPPIHLHRMKSLIRSKAERPQGGRHTGISTLGKKAKAGSGLRKKQRRLPRSVRSTRDVQAAGKKEDAPQDLALAVCLSVFITFLVAFSLGAFTRPYVDRLWQKKCQSKSPGLDNAYSNEGFYDDMEAAGHTPHPETHLRQVFPHLSLYENQTPFWVTQPHPHATVIPDRTLGRSRKDPGSSQSPGQCGDNTGAGSGNDGAVYSILQRHPHAGNRELMSAAQDHIHRNDILGEWTYETVAQEEPLSAHSVGVSSVAGTSHAVSGSSRYDSNELDPSLSGEITASLCKMLTHAEAQRTGDSKERGGTEQSLWDSQMEFSKERQVSSSIDLLSIQQPRLSGARAEEALSAHYSEVPYGDPRDTGPSVFPPRWDSGLDVTPANKEPVQKSTPSDTCCELESDCDSDEGSLFTLSSISSESARSKTEEAVPDEESLQDESSGASKDNVTAVDSLEENVTFQTIPGKCKNQEDPFEKPLISAPDSGMYKTHLENASDTDRSEGLSPWPRSPGNSPLGDEFPGMFTYDYDTALQSKAAEWHCSLRDLEFSNVDVLQQTPPCSAEVPSDPDKAAFHERDSDILK</sequence>
<evidence type="ECO:0000250" key="1">
    <source>
        <dbReference type="UniProtKB" id="Q6TXF5"/>
    </source>
</evidence>
<evidence type="ECO:0000250" key="2">
    <source>
        <dbReference type="UniProtKB" id="Q8K0B3"/>
    </source>
</evidence>
<evidence type="ECO:0000255" key="3"/>
<evidence type="ECO:0000256" key="4">
    <source>
        <dbReference type="SAM" id="MobiDB-lite"/>
    </source>
</evidence>
<evidence type="ECO:0000305" key="5"/>
<proteinExistence type="evidence at protein level"/>
<dbReference type="EMBL" id="CR749811">
    <property type="protein sequence ID" value="CAH18671.1"/>
    <property type="molecule type" value="mRNA"/>
</dbReference>
<dbReference type="CCDS" id="CCDS43229.1"/>
<dbReference type="RefSeq" id="NP_001019782.1">
    <property type="nucleotide sequence ID" value="NM_001024611.3"/>
</dbReference>
<dbReference type="SMR" id="Q68CR7"/>
<dbReference type="BioGRID" id="130975">
    <property type="interactions" value="3"/>
</dbReference>
<dbReference type="IntAct" id="Q68CR7">
    <property type="interactions" value="2"/>
</dbReference>
<dbReference type="STRING" id="9606.ENSP00000341944"/>
<dbReference type="GlyCosmos" id="Q68CR7">
    <property type="glycosylation" value="4 sites, No reported glycans"/>
</dbReference>
<dbReference type="GlyGen" id="Q68CR7">
    <property type="glycosylation" value="4 sites"/>
</dbReference>
<dbReference type="iPTMnet" id="Q68CR7"/>
<dbReference type="PhosphoSitePlus" id="Q68CR7"/>
<dbReference type="BioMuta" id="LRRC66"/>
<dbReference type="DMDM" id="74757322"/>
<dbReference type="jPOST" id="Q68CR7"/>
<dbReference type="MassIVE" id="Q68CR7"/>
<dbReference type="PaxDb" id="9606-ENSP00000341944"/>
<dbReference type="PeptideAtlas" id="Q68CR7"/>
<dbReference type="ProteomicsDB" id="66026"/>
<dbReference type="Antibodypedia" id="3070">
    <property type="antibodies" value="54 antibodies from 14 providers"/>
</dbReference>
<dbReference type="DNASU" id="339977"/>
<dbReference type="Ensembl" id="ENST00000343457.3">
    <property type="protein sequence ID" value="ENSP00000341944.3"/>
    <property type="gene ID" value="ENSG00000188993.4"/>
</dbReference>
<dbReference type="Ensembl" id="ENST00000682860.1">
    <property type="protein sequence ID" value="ENSP00000508002.1"/>
    <property type="gene ID" value="ENSG00000188993.4"/>
</dbReference>
<dbReference type="GeneID" id="339977"/>
<dbReference type="KEGG" id="hsa:339977"/>
<dbReference type="MANE-Select" id="ENST00000682860.1">
    <property type="protein sequence ID" value="ENSP00000508002.1"/>
    <property type="RefSeq nucleotide sequence ID" value="NM_001024611.3"/>
    <property type="RefSeq protein sequence ID" value="NP_001019782.1"/>
</dbReference>
<dbReference type="UCSC" id="uc003gzi.4">
    <property type="organism name" value="human"/>
</dbReference>
<dbReference type="AGR" id="HGNC:34299"/>
<dbReference type="CTD" id="339977"/>
<dbReference type="DisGeNET" id="339977"/>
<dbReference type="GeneCards" id="LRRC66"/>
<dbReference type="HGNC" id="HGNC:34299">
    <property type="gene designation" value="LRRC66"/>
</dbReference>
<dbReference type="HPA" id="ENSG00000188993">
    <property type="expression patterns" value="Tissue enhanced (intestine, skeletal muscle)"/>
</dbReference>
<dbReference type="neXtProt" id="NX_Q68CR7"/>
<dbReference type="OpenTargets" id="ENSG00000188993"/>
<dbReference type="PharmGKB" id="PA162394587"/>
<dbReference type="VEuPathDB" id="HostDB:ENSG00000188993"/>
<dbReference type="eggNOG" id="KOG0619">
    <property type="taxonomic scope" value="Eukaryota"/>
</dbReference>
<dbReference type="GeneTree" id="ENSGT00390000014817"/>
<dbReference type="HOGENOM" id="CLU_016612_0_0_1"/>
<dbReference type="InParanoid" id="Q68CR7"/>
<dbReference type="OMA" id="LWDSQME"/>
<dbReference type="OrthoDB" id="660555at2759"/>
<dbReference type="PAN-GO" id="Q68CR7">
    <property type="GO annotations" value="0 GO annotations based on evolutionary models"/>
</dbReference>
<dbReference type="PhylomeDB" id="Q68CR7"/>
<dbReference type="TreeFam" id="TF332577"/>
<dbReference type="PathwayCommons" id="Q68CR7"/>
<dbReference type="SignaLink" id="Q68CR7"/>
<dbReference type="BioGRID-ORCS" id="339977">
    <property type="hits" value="11 hits in 1146 CRISPR screens"/>
</dbReference>
<dbReference type="ChiTaRS" id="LRRC66">
    <property type="organism name" value="human"/>
</dbReference>
<dbReference type="GenomeRNAi" id="339977"/>
<dbReference type="Pharos" id="Q68CR7">
    <property type="development level" value="Tdark"/>
</dbReference>
<dbReference type="PRO" id="PR:Q68CR7"/>
<dbReference type="Proteomes" id="UP000005640">
    <property type="component" value="Chromosome 4"/>
</dbReference>
<dbReference type="RNAct" id="Q68CR7">
    <property type="molecule type" value="protein"/>
</dbReference>
<dbReference type="Bgee" id="ENSG00000188993">
    <property type="expression patterns" value="Expressed in jejunal mucosa and 100 other cell types or tissues"/>
</dbReference>
<dbReference type="GO" id="GO:0016020">
    <property type="term" value="C:membrane"/>
    <property type="evidence" value="ECO:0007669"/>
    <property type="project" value="UniProtKB-SubCell"/>
</dbReference>
<dbReference type="Gene3D" id="3.80.10.10">
    <property type="entry name" value="Ribonuclease Inhibitor"/>
    <property type="match status" value="2"/>
</dbReference>
<dbReference type="InterPro" id="IPR001611">
    <property type="entry name" value="Leu-rich_rpt"/>
</dbReference>
<dbReference type="InterPro" id="IPR003591">
    <property type="entry name" value="Leu-rich_rpt_typical-subtyp"/>
</dbReference>
<dbReference type="InterPro" id="IPR032675">
    <property type="entry name" value="LRR_dom_sf"/>
</dbReference>
<dbReference type="InterPro" id="IPR050541">
    <property type="entry name" value="LRR_TM_domain-containing"/>
</dbReference>
<dbReference type="PANTHER" id="PTHR24369">
    <property type="entry name" value="ANTIGEN BSP, PUTATIVE-RELATED"/>
    <property type="match status" value="1"/>
</dbReference>
<dbReference type="PANTHER" id="PTHR24369:SF213">
    <property type="entry name" value="INSULIN LIKE GROWTH FACTOR BINDING PROTEIN ACID LABILE SUBUNIT"/>
    <property type="match status" value="1"/>
</dbReference>
<dbReference type="Pfam" id="PF00560">
    <property type="entry name" value="LRR_1"/>
    <property type="match status" value="1"/>
</dbReference>
<dbReference type="Pfam" id="PF13855">
    <property type="entry name" value="LRR_8"/>
    <property type="match status" value="2"/>
</dbReference>
<dbReference type="SMART" id="SM00369">
    <property type="entry name" value="LRR_TYP"/>
    <property type="match status" value="5"/>
</dbReference>
<dbReference type="SUPFAM" id="SSF52058">
    <property type="entry name" value="L domain-like"/>
    <property type="match status" value="1"/>
</dbReference>
<dbReference type="PROSITE" id="PS51450">
    <property type="entry name" value="LRR"/>
    <property type="match status" value="6"/>
</dbReference>
<name>LRC66_HUMAN</name>
<feature type="chain" id="PRO_0000329433" description="Leucine-rich repeat-containing protein 66">
    <location>
        <begin position="1"/>
        <end position="880"/>
    </location>
</feature>
<feature type="transmembrane region" description="Helical" evidence="3">
    <location>
        <begin position="4"/>
        <end position="24"/>
    </location>
</feature>
<feature type="transmembrane region" description="Helical" evidence="3">
    <location>
        <begin position="376"/>
        <end position="396"/>
    </location>
</feature>
<feature type="repeat" description="LRR 1">
    <location>
        <begin position="86"/>
        <end position="107"/>
    </location>
</feature>
<feature type="repeat" description="LRR 2">
    <location>
        <begin position="110"/>
        <end position="130"/>
    </location>
</feature>
<feature type="repeat" description="LRR 3">
    <location>
        <begin position="149"/>
        <end position="171"/>
    </location>
</feature>
<feature type="repeat" description="LRR 4">
    <location>
        <begin position="172"/>
        <end position="193"/>
    </location>
</feature>
<feature type="repeat" description="LRR 5">
    <location>
        <begin position="196"/>
        <end position="217"/>
    </location>
</feature>
<feature type="repeat" description="LRR 6">
    <location>
        <begin position="220"/>
        <end position="241"/>
    </location>
</feature>
<feature type="region of interest" description="Disordered" evidence="4">
    <location>
        <begin position="319"/>
        <end position="368"/>
    </location>
</feature>
<feature type="region of interest" description="Disordered" evidence="4">
    <location>
        <begin position="463"/>
        <end position="504"/>
    </location>
</feature>
<feature type="region of interest" description="Disordered" evidence="4">
    <location>
        <begin position="679"/>
        <end position="746"/>
    </location>
</feature>
<feature type="region of interest" description="Disordered" evidence="4">
    <location>
        <begin position="764"/>
        <end position="816"/>
    </location>
</feature>
<feature type="region of interest" description="Disordered" evidence="4">
    <location>
        <begin position="855"/>
        <end position="880"/>
    </location>
</feature>
<feature type="compositionally biased region" description="Basic residues" evidence="4">
    <location>
        <begin position="337"/>
        <end position="354"/>
    </location>
</feature>
<feature type="compositionally biased region" description="Polar residues" evidence="4">
    <location>
        <begin position="483"/>
        <end position="493"/>
    </location>
</feature>
<feature type="compositionally biased region" description="Acidic residues" evidence="4">
    <location>
        <begin position="697"/>
        <end position="707"/>
    </location>
</feature>
<feature type="compositionally biased region" description="Low complexity" evidence="4">
    <location>
        <begin position="709"/>
        <end position="720"/>
    </location>
</feature>
<feature type="compositionally biased region" description="Polar residues" evidence="4">
    <location>
        <begin position="737"/>
        <end position="746"/>
    </location>
</feature>
<feature type="compositionally biased region" description="Basic and acidic residues" evidence="4">
    <location>
        <begin position="788"/>
        <end position="800"/>
    </location>
</feature>
<feature type="compositionally biased region" description="Basic and acidic residues" evidence="4">
    <location>
        <begin position="865"/>
        <end position="880"/>
    </location>
</feature>
<feature type="modified residue" description="Phosphoserine" evidence="1">
    <location>
        <position position="723"/>
    </location>
</feature>
<feature type="modified residue" description="Phosphoserine" evidence="2">
    <location>
        <position position="752"/>
    </location>
</feature>
<feature type="glycosylation site" description="N-linked (GlcNAc...) asparagine" evidence="3">
    <location>
        <position position="45"/>
    </location>
</feature>
<feature type="glycosylation site" description="N-linked (GlcNAc...) asparagine" evidence="3">
    <location>
        <position position="115"/>
    </location>
</feature>
<feature type="glycosylation site" description="N-linked (GlcNAc...) asparagine" evidence="3">
    <location>
        <position position="746"/>
    </location>
</feature>
<feature type="glycosylation site" description="N-linked (GlcNAc...) asparagine" evidence="3">
    <location>
        <position position="756"/>
    </location>
</feature>
<feature type="sequence variant" id="VAR_051124" description="In dbSNP:rs17081784.">
    <original>G</original>
    <variation>A</variation>
    <location>
        <position position="342"/>
    </location>
</feature>
<comment type="subcellular location">
    <subcellularLocation>
        <location evidence="5">Membrane</location>
        <topology evidence="5">Multi-pass membrane protein</topology>
    </subcellularLocation>
</comment>
<keyword id="KW-0325">Glycoprotein</keyword>
<keyword id="KW-0433">Leucine-rich repeat</keyword>
<keyword id="KW-0472">Membrane</keyword>
<keyword id="KW-0597">Phosphoprotein</keyword>
<keyword id="KW-1267">Proteomics identification</keyword>
<keyword id="KW-1185">Reference proteome</keyword>
<keyword id="KW-0677">Repeat</keyword>
<keyword id="KW-0812">Transmembrane</keyword>
<keyword id="KW-1133">Transmembrane helix</keyword>